<evidence type="ECO:0000250" key="1">
    <source>
        <dbReference type="UniProtKB" id="P23531"/>
    </source>
</evidence>
<evidence type="ECO:0000255" key="2">
    <source>
        <dbReference type="PROSITE-ProRule" id="PRU00423"/>
    </source>
</evidence>
<evidence type="ECO:0000255" key="3">
    <source>
        <dbReference type="PROSITE-ProRule" id="PRU00428"/>
    </source>
</evidence>
<evidence type="ECO:0000269" key="4">
    <source>
    </source>
</evidence>
<evidence type="ECO:0000303" key="5">
    <source>
    </source>
</evidence>
<evidence type="ECO:0000305" key="6">
    <source>
    </source>
</evidence>
<gene>
    <name evidence="5" type="primary">lacE</name>
</gene>
<comment type="function">
    <text evidence="4">The phosphoenolpyruvate-dependent sugar phosphotransferase system (sugar PTS), a major carbohydrate active transport system, catalyzes the phosphorylation of incoming sugar substrates concomitantly with their translocation across the cell membrane. The enzyme II LacEF PTS system is involved in lactose transport.</text>
</comment>
<comment type="catalytic activity">
    <reaction evidence="4">
        <text>lactose(out) + N(pros)-phospho-L-histidyl-[protein] = lactose 6-phosphate(in) + L-histidyl-[protein]</text>
        <dbReference type="Rhea" id="RHEA:42400"/>
        <dbReference type="Rhea" id="RHEA-COMP:9745"/>
        <dbReference type="Rhea" id="RHEA-COMP:9746"/>
        <dbReference type="ChEBI" id="CHEBI:17716"/>
        <dbReference type="ChEBI" id="CHEBI:29979"/>
        <dbReference type="ChEBI" id="CHEBI:64837"/>
        <dbReference type="ChEBI" id="CHEBI:79080"/>
        <dbReference type="EC" id="2.7.1.207"/>
    </reaction>
</comment>
<comment type="subcellular location">
    <subcellularLocation>
        <location evidence="3 6">Cell membrane</location>
        <topology evidence="3">Multi-pass membrane protein</topology>
    </subcellularLocation>
</comment>
<comment type="induction">
    <text evidence="1">By lactose. The operon consists of lacABCDFEGX. A second transcript of only lacF and lacE is also lactose-induced.</text>
</comment>
<comment type="domain">
    <text evidence="3">The EIIC type-3 domain forms the PTS system translocation channel and contains the specific substrate-binding site.</text>
</comment>
<comment type="domain">
    <text evidence="2">The PTS EIIB type-3 domain is phosphorylated by phospho-EIIA on a cysteinyl residue. Then, it transfers the phosphoryl group to the sugar substrate concomitantly with the sugar uptake processed by the PTS EIIC type-3 domain.</text>
</comment>
<accession>P24400</accession>
<name>PTLCB_LACCA</name>
<proteinExistence type="evidence at protein level"/>
<dbReference type="EC" id="2.7.1.207" evidence="4"/>
<dbReference type="EMBL" id="M60851">
    <property type="protein sequence ID" value="AAA72984.1"/>
    <property type="molecule type" value="Genomic_DNA"/>
</dbReference>
<dbReference type="PIR" id="B23697">
    <property type="entry name" value="B23697"/>
</dbReference>
<dbReference type="SMR" id="P24400"/>
<dbReference type="STRING" id="1582.AAW28_06690"/>
<dbReference type="iPTMnet" id="P24400"/>
<dbReference type="eggNOG" id="COG1440">
    <property type="taxonomic scope" value="Bacteria"/>
</dbReference>
<dbReference type="eggNOG" id="COG1455">
    <property type="taxonomic scope" value="Bacteria"/>
</dbReference>
<dbReference type="GO" id="GO:0005886">
    <property type="term" value="C:plasma membrane"/>
    <property type="evidence" value="ECO:0007669"/>
    <property type="project" value="UniProtKB-SubCell"/>
</dbReference>
<dbReference type="GO" id="GO:0016301">
    <property type="term" value="F:kinase activity"/>
    <property type="evidence" value="ECO:0007669"/>
    <property type="project" value="UniProtKB-KW"/>
</dbReference>
<dbReference type="GO" id="GO:0022869">
    <property type="term" value="F:protein-N(PI)-phosphohistidine-lactose phosphotransferase system transporter activity"/>
    <property type="evidence" value="ECO:0007669"/>
    <property type="project" value="InterPro"/>
</dbReference>
<dbReference type="GO" id="GO:1901264">
    <property type="term" value="P:carbohydrate derivative transport"/>
    <property type="evidence" value="ECO:0007669"/>
    <property type="project" value="TreeGrafter"/>
</dbReference>
<dbReference type="GO" id="GO:0046835">
    <property type="term" value="P:carbohydrate phosphorylation"/>
    <property type="evidence" value="ECO:0000315"/>
    <property type="project" value="CACAO"/>
</dbReference>
<dbReference type="GO" id="GO:0009401">
    <property type="term" value="P:phosphoenolpyruvate-dependent sugar phosphotransferase system"/>
    <property type="evidence" value="ECO:0007669"/>
    <property type="project" value="UniProtKB-KW"/>
</dbReference>
<dbReference type="GO" id="GO:0016310">
    <property type="term" value="P:phosphorylation"/>
    <property type="evidence" value="ECO:0000315"/>
    <property type="project" value="CACAO"/>
</dbReference>
<dbReference type="CDD" id="cd05565">
    <property type="entry name" value="PTS_IIB_lactose"/>
    <property type="match status" value="1"/>
</dbReference>
<dbReference type="Gene3D" id="3.40.50.2300">
    <property type="match status" value="1"/>
</dbReference>
<dbReference type="InterPro" id="IPR004801">
    <property type="entry name" value="LacE"/>
</dbReference>
<dbReference type="InterPro" id="IPR036095">
    <property type="entry name" value="PTS_EIIB-like_sf"/>
</dbReference>
<dbReference type="InterPro" id="IPR003501">
    <property type="entry name" value="PTS_EIIB_2/3"/>
</dbReference>
<dbReference type="InterPro" id="IPR013012">
    <property type="entry name" value="PTS_EIIB_3"/>
</dbReference>
<dbReference type="InterPro" id="IPR003352">
    <property type="entry name" value="PTS_EIIC"/>
</dbReference>
<dbReference type="InterPro" id="IPR004501">
    <property type="entry name" value="PTS_EIIC_3"/>
</dbReference>
<dbReference type="InterPro" id="IPR041713">
    <property type="entry name" value="PTS_IIB"/>
</dbReference>
<dbReference type="InterPro" id="IPR051088">
    <property type="entry name" value="PTS_Sugar-EIIC/EIIB"/>
</dbReference>
<dbReference type="NCBIfam" id="TIGR00394">
    <property type="entry name" value="lac_pts_IIC"/>
    <property type="match status" value="1"/>
</dbReference>
<dbReference type="NCBIfam" id="TIGR00410">
    <property type="entry name" value="lacE"/>
    <property type="match status" value="1"/>
</dbReference>
<dbReference type="NCBIfam" id="TIGR00853">
    <property type="entry name" value="pts-lac"/>
    <property type="match status" value="1"/>
</dbReference>
<dbReference type="PANTHER" id="PTHR33989">
    <property type="match status" value="1"/>
</dbReference>
<dbReference type="PANTHER" id="PTHR33989:SF8">
    <property type="entry name" value="PERMEASE IIC COMPONENT"/>
    <property type="match status" value="1"/>
</dbReference>
<dbReference type="Pfam" id="PF02378">
    <property type="entry name" value="PTS_EIIC"/>
    <property type="match status" value="1"/>
</dbReference>
<dbReference type="Pfam" id="PF02302">
    <property type="entry name" value="PTS_IIB"/>
    <property type="match status" value="1"/>
</dbReference>
<dbReference type="SUPFAM" id="SSF52794">
    <property type="entry name" value="PTS system IIB component-like"/>
    <property type="match status" value="1"/>
</dbReference>
<dbReference type="PROSITE" id="PS51100">
    <property type="entry name" value="PTS_EIIB_TYPE_3"/>
    <property type="match status" value="1"/>
</dbReference>
<dbReference type="PROSITE" id="PS51105">
    <property type="entry name" value="PTS_EIIC_TYPE_3"/>
    <property type="match status" value="1"/>
</dbReference>
<reference key="1">
    <citation type="journal article" date="1990" name="J. Biol. Chem.">
        <title>Molecular cloning and DNA sequence of lacE, the gene encoding the lactose-specific enzyme II of the phosphotransferase system of Lactobacillus casei. Evidence that a cysteine residue is essential for sugar phosphorylation.</title>
        <authorList>
            <person name="Alpert C.-A."/>
            <person name="Chassy B.M."/>
        </authorList>
    </citation>
    <scope>NUCLEOTIDE SEQUENCE [GENOMIC DNA]</scope>
    <scope>FUNCTION</scope>
    <scope>CATALYTIC ACTIVITY</scope>
    <scope>MUTAGENESIS OF CYS-483</scope>
    <scope>ACTIVE SITE</scope>
    <scope>PHOSPHORYLATION AT CYS-483</scope>
    <scope>SUBCELLULAR LOCATION</scope>
</reference>
<sequence length="577" mass="62392">MNKVFDKLKPVFEAIAANKYISAIRDGFIACMPIIIFSSIFMMVAYVPNAWGFYWPDNVTNTLMVAYNYSMGLLALFVAGTTAKNLTDSKNLELPKTNQINPVAVIVASEISFVILSILPLKTGVDLTYMGTQGLICAYIVGLIVPNIYYVCIKNNVTIKLPEQVPGNIAQSFKDLIPMGLSVTAFWLFGVGFKAATGTVLPRWIIQVLSPLFQASDSYLGLALIAGAMAFFWFCGVQGPSIVQPAVVPIMIANTAANLQQYQAGQHVSHVLAMNTMDYVMNFGGTGATLVVPFIMLFAARSAQLKAVGKAAFVPCTFGVNEPVLFGMPIIMNPMLFIPFLATPIVNVCLFKFFVSVLGMNSMMYTMPWTVPGPIGILISTGFAPLAFVFVLLTLVLDVAIYFPFIRVYDSTLLAEEKAKEEVIEDDGMAVLASDTVSPSIPTGLTVATATDDDATHVLPETAPSAHGEAYFKQNEVDVLVLCAGGGTSGILANALNKLSKERGLKLSAAARAYGQDMDLIKDMNMVILAPQMESMKGNLKKITDKYGVKLVTTTGRQYIELTNNGDMALDFVESNL</sequence>
<protein>
    <recommendedName>
        <fullName evidence="5">PTS system lactose-specific EIICB component</fullName>
    </recommendedName>
    <alternativeName>
        <fullName evidence="5">EIICB-Lac</fullName>
        <shortName evidence="5">EII-Lac</shortName>
    </alternativeName>
    <domain>
        <recommendedName>
            <fullName evidence="5">PTS system lactose-specific EIIC component</fullName>
        </recommendedName>
        <alternativeName>
            <fullName evidence="5">Lactose permease IIC component</fullName>
        </alternativeName>
    </domain>
    <domain>
        <recommendedName>
            <fullName evidence="5">PTS system lactose-specific EIIB component</fullName>
            <ecNumber evidence="4">2.7.1.207</ecNumber>
        </recommendedName>
        <alternativeName>
            <fullName evidence="5">Lactose-specific phosphotransferase enzyme IIB component</fullName>
        </alternativeName>
    </domain>
</protein>
<organism>
    <name type="scientific">Lacticaseibacillus casei</name>
    <name type="common">Lactobacillus casei</name>
    <dbReference type="NCBI Taxonomy" id="1582"/>
    <lineage>
        <taxon>Bacteria</taxon>
        <taxon>Bacillati</taxon>
        <taxon>Bacillota</taxon>
        <taxon>Bacilli</taxon>
        <taxon>Lactobacillales</taxon>
        <taxon>Lactobacillaceae</taxon>
        <taxon>Lacticaseibacillus</taxon>
    </lineage>
</organism>
<feature type="chain" id="PRO_0000186583" description="PTS system lactose-specific EIICB component">
    <location>
        <begin position="1"/>
        <end position="577"/>
    </location>
</feature>
<feature type="transmembrane region" description="Helical" evidence="3">
    <location>
        <begin position="27"/>
        <end position="47"/>
    </location>
</feature>
<feature type="transmembrane region" description="Helical" evidence="3">
    <location>
        <begin position="63"/>
        <end position="83"/>
    </location>
</feature>
<feature type="transmembrane region" description="Helical" evidence="3">
    <location>
        <begin position="100"/>
        <end position="120"/>
    </location>
</feature>
<feature type="transmembrane region" description="Helical" evidence="3">
    <location>
        <begin position="133"/>
        <end position="153"/>
    </location>
</feature>
<feature type="transmembrane region" description="Helical" evidence="3">
    <location>
        <begin position="176"/>
        <end position="196"/>
    </location>
</feature>
<feature type="transmembrane region" description="Helical" evidence="3">
    <location>
        <begin position="219"/>
        <end position="239"/>
    </location>
</feature>
<feature type="transmembrane region" description="Helical" evidence="3">
    <location>
        <begin position="280"/>
        <end position="300"/>
    </location>
</feature>
<feature type="transmembrane region" description="Helical" evidence="3">
    <location>
        <begin position="326"/>
        <end position="346"/>
    </location>
</feature>
<feature type="transmembrane region" description="Helical" evidence="3">
    <location>
        <begin position="386"/>
        <end position="406"/>
    </location>
</feature>
<feature type="domain" description="PTS EIIC type-3" evidence="3">
    <location>
        <begin position="4"/>
        <end position="405"/>
    </location>
</feature>
<feature type="domain" description="PTS EIIB type-3" evidence="2">
    <location>
        <begin position="476"/>
        <end position="577"/>
    </location>
</feature>
<feature type="active site" description="Phosphocysteine intermediate; for EIIB activity" evidence="6">
    <location>
        <position position="483"/>
    </location>
</feature>
<feature type="modified residue" description="Phosphocysteine; by EIIA" evidence="2 4">
    <location>
        <position position="483"/>
    </location>
</feature>
<feature type="mutagenesis site" description="Unable to be phosphorylated." evidence="4">
    <original>C</original>
    <variation>H</variation>
    <variation>S</variation>
    <location>
        <position position="483"/>
    </location>
</feature>
<keyword id="KW-1003">Cell membrane</keyword>
<keyword id="KW-0418">Kinase</keyword>
<keyword id="KW-0472">Membrane</keyword>
<keyword id="KW-0597">Phosphoprotein</keyword>
<keyword id="KW-0598">Phosphotransferase system</keyword>
<keyword id="KW-0762">Sugar transport</keyword>
<keyword id="KW-0808">Transferase</keyword>
<keyword id="KW-0812">Transmembrane</keyword>
<keyword id="KW-1133">Transmembrane helix</keyword>
<keyword id="KW-0813">Transport</keyword>